<name>RS12_OENOB</name>
<sequence length="137" mass="15353">MPTINQLVRKPRKPRTFKSKVPALNFGYNSMSRKQTNNTAPQKRGVATRVGTMTPKKPNSALRKYARVRLSNQYEVTAYIPGIGHNLQEHSVVLIRGGRVKDLPGVRYHIIRGALDTAGVEGRMNGRSKYGAKRPKK</sequence>
<protein>
    <recommendedName>
        <fullName evidence="2">Small ribosomal subunit protein uS12</fullName>
    </recommendedName>
    <alternativeName>
        <fullName evidence="4">30S ribosomal protein S12</fullName>
    </alternativeName>
</protein>
<organism>
    <name type="scientific">Oenococcus oeni (strain ATCC BAA-331 / PSU-1)</name>
    <dbReference type="NCBI Taxonomy" id="203123"/>
    <lineage>
        <taxon>Bacteria</taxon>
        <taxon>Bacillati</taxon>
        <taxon>Bacillota</taxon>
        <taxon>Bacilli</taxon>
        <taxon>Lactobacillales</taxon>
        <taxon>Lactobacillaceae</taxon>
        <taxon>Oenococcus</taxon>
    </lineage>
</organism>
<evidence type="ECO:0000250" key="1"/>
<evidence type="ECO:0000255" key="2">
    <source>
        <dbReference type="HAMAP-Rule" id="MF_00403"/>
    </source>
</evidence>
<evidence type="ECO:0000256" key="3">
    <source>
        <dbReference type="SAM" id="MobiDB-lite"/>
    </source>
</evidence>
<evidence type="ECO:0000305" key="4"/>
<reference key="1">
    <citation type="journal article" date="2006" name="Proc. Natl. Acad. Sci. U.S.A.">
        <title>Comparative genomics of the lactic acid bacteria.</title>
        <authorList>
            <person name="Makarova K.S."/>
            <person name="Slesarev A."/>
            <person name="Wolf Y.I."/>
            <person name="Sorokin A."/>
            <person name="Mirkin B."/>
            <person name="Koonin E.V."/>
            <person name="Pavlov A."/>
            <person name="Pavlova N."/>
            <person name="Karamychev V."/>
            <person name="Polouchine N."/>
            <person name="Shakhova V."/>
            <person name="Grigoriev I."/>
            <person name="Lou Y."/>
            <person name="Rohksar D."/>
            <person name="Lucas S."/>
            <person name="Huang K."/>
            <person name="Goodstein D.M."/>
            <person name="Hawkins T."/>
            <person name="Plengvidhya V."/>
            <person name="Welker D."/>
            <person name="Hughes J."/>
            <person name="Goh Y."/>
            <person name="Benson A."/>
            <person name="Baldwin K."/>
            <person name="Lee J.-H."/>
            <person name="Diaz-Muniz I."/>
            <person name="Dosti B."/>
            <person name="Smeianov V."/>
            <person name="Wechter W."/>
            <person name="Barabote R."/>
            <person name="Lorca G."/>
            <person name="Altermann E."/>
            <person name="Barrangou R."/>
            <person name="Ganesan B."/>
            <person name="Xie Y."/>
            <person name="Rawsthorne H."/>
            <person name="Tamir D."/>
            <person name="Parker C."/>
            <person name="Breidt F."/>
            <person name="Broadbent J.R."/>
            <person name="Hutkins R."/>
            <person name="O'Sullivan D."/>
            <person name="Steele J."/>
            <person name="Unlu G."/>
            <person name="Saier M.H. Jr."/>
            <person name="Klaenhammer T."/>
            <person name="Richardson P."/>
            <person name="Kozyavkin S."/>
            <person name="Weimer B.C."/>
            <person name="Mills D.A."/>
        </authorList>
    </citation>
    <scope>NUCLEOTIDE SEQUENCE [LARGE SCALE GENOMIC DNA]</scope>
    <source>
        <strain>ATCC BAA-331 / PSU-1</strain>
    </source>
</reference>
<accession>Q04ED4</accession>
<comment type="function">
    <text evidence="2">With S4 and S5 plays an important role in translational accuracy.</text>
</comment>
<comment type="function">
    <text evidence="2">Interacts with and stabilizes bases of the 16S rRNA that are involved in tRNA selection in the A site and with the mRNA backbone. Located at the interface of the 30S and 50S subunits, it traverses the body of the 30S subunit contacting proteins on the other side and probably holding the rRNA structure together. The combined cluster of proteins S8, S12 and S17 appears to hold together the shoulder and platform of the 30S subunit.</text>
</comment>
<comment type="subunit">
    <text evidence="2">Part of the 30S ribosomal subunit. Contacts proteins S8 and S17. May interact with IF1 in the 30S initiation complex.</text>
</comment>
<comment type="similarity">
    <text evidence="2">Belongs to the universal ribosomal protein uS12 family.</text>
</comment>
<gene>
    <name evidence="2" type="primary">rpsL</name>
    <name type="ordered locus">OEOE_1316</name>
</gene>
<proteinExistence type="inferred from homology"/>
<feature type="chain" id="PRO_0000296008" description="Small ribosomal subunit protein uS12">
    <location>
        <begin position="1"/>
        <end position="137"/>
    </location>
</feature>
<feature type="region of interest" description="Disordered" evidence="3">
    <location>
        <begin position="31"/>
        <end position="57"/>
    </location>
</feature>
<feature type="compositionally biased region" description="Polar residues" evidence="3">
    <location>
        <begin position="31"/>
        <end position="41"/>
    </location>
</feature>
<feature type="modified residue" description="3-methylthioaspartic acid" evidence="1">
    <location>
        <position position="102"/>
    </location>
</feature>
<dbReference type="EMBL" id="CP000411">
    <property type="protein sequence ID" value="ABJ57188.1"/>
    <property type="molecule type" value="Genomic_DNA"/>
</dbReference>
<dbReference type="RefSeq" id="WP_002816784.1">
    <property type="nucleotide sequence ID" value="NC_008528.1"/>
</dbReference>
<dbReference type="SMR" id="Q04ED4"/>
<dbReference type="STRING" id="203123.OEOE_1316"/>
<dbReference type="GeneID" id="75065580"/>
<dbReference type="KEGG" id="ooe:OEOE_1316"/>
<dbReference type="eggNOG" id="COG0048">
    <property type="taxonomic scope" value="Bacteria"/>
</dbReference>
<dbReference type="HOGENOM" id="CLU_104295_1_2_9"/>
<dbReference type="Proteomes" id="UP000000774">
    <property type="component" value="Chromosome"/>
</dbReference>
<dbReference type="GO" id="GO:0015935">
    <property type="term" value="C:small ribosomal subunit"/>
    <property type="evidence" value="ECO:0007669"/>
    <property type="project" value="InterPro"/>
</dbReference>
<dbReference type="GO" id="GO:0019843">
    <property type="term" value="F:rRNA binding"/>
    <property type="evidence" value="ECO:0007669"/>
    <property type="project" value="UniProtKB-UniRule"/>
</dbReference>
<dbReference type="GO" id="GO:0003735">
    <property type="term" value="F:structural constituent of ribosome"/>
    <property type="evidence" value="ECO:0007669"/>
    <property type="project" value="InterPro"/>
</dbReference>
<dbReference type="GO" id="GO:0000049">
    <property type="term" value="F:tRNA binding"/>
    <property type="evidence" value="ECO:0007669"/>
    <property type="project" value="UniProtKB-UniRule"/>
</dbReference>
<dbReference type="GO" id="GO:0006412">
    <property type="term" value="P:translation"/>
    <property type="evidence" value="ECO:0007669"/>
    <property type="project" value="UniProtKB-UniRule"/>
</dbReference>
<dbReference type="CDD" id="cd03368">
    <property type="entry name" value="Ribosomal_S12"/>
    <property type="match status" value="1"/>
</dbReference>
<dbReference type="FunFam" id="2.40.50.140:FF:000001">
    <property type="entry name" value="30S ribosomal protein S12"/>
    <property type="match status" value="1"/>
</dbReference>
<dbReference type="Gene3D" id="2.40.50.140">
    <property type="entry name" value="Nucleic acid-binding proteins"/>
    <property type="match status" value="1"/>
</dbReference>
<dbReference type="HAMAP" id="MF_00403_B">
    <property type="entry name" value="Ribosomal_uS12_B"/>
    <property type="match status" value="1"/>
</dbReference>
<dbReference type="InterPro" id="IPR012340">
    <property type="entry name" value="NA-bd_OB-fold"/>
</dbReference>
<dbReference type="InterPro" id="IPR006032">
    <property type="entry name" value="Ribosomal_uS12"/>
</dbReference>
<dbReference type="InterPro" id="IPR005679">
    <property type="entry name" value="Ribosomal_uS12_bac"/>
</dbReference>
<dbReference type="NCBIfam" id="TIGR00981">
    <property type="entry name" value="rpsL_bact"/>
    <property type="match status" value="1"/>
</dbReference>
<dbReference type="PANTHER" id="PTHR11652">
    <property type="entry name" value="30S RIBOSOMAL PROTEIN S12 FAMILY MEMBER"/>
    <property type="match status" value="1"/>
</dbReference>
<dbReference type="Pfam" id="PF00164">
    <property type="entry name" value="Ribosom_S12_S23"/>
    <property type="match status" value="1"/>
</dbReference>
<dbReference type="PRINTS" id="PR01034">
    <property type="entry name" value="RIBOSOMALS12"/>
</dbReference>
<dbReference type="SUPFAM" id="SSF50249">
    <property type="entry name" value="Nucleic acid-binding proteins"/>
    <property type="match status" value="1"/>
</dbReference>
<dbReference type="PROSITE" id="PS00055">
    <property type="entry name" value="RIBOSOMAL_S12"/>
    <property type="match status" value="1"/>
</dbReference>
<keyword id="KW-0488">Methylation</keyword>
<keyword id="KW-1185">Reference proteome</keyword>
<keyword id="KW-0687">Ribonucleoprotein</keyword>
<keyword id="KW-0689">Ribosomal protein</keyword>
<keyword id="KW-0694">RNA-binding</keyword>
<keyword id="KW-0699">rRNA-binding</keyword>
<keyword id="KW-0820">tRNA-binding</keyword>